<proteinExistence type="inferred from homology"/>
<organism>
    <name type="scientific">Pyrenophora tritici-repentis (strain Pt-1C-BFP)</name>
    <name type="common">Wheat tan spot fungus</name>
    <name type="synonym">Drechslera tritici-repentis</name>
    <dbReference type="NCBI Taxonomy" id="426418"/>
    <lineage>
        <taxon>Eukaryota</taxon>
        <taxon>Fungi</taxon>
        <taxon>Dikarya</taxon>
        <taxon>Ascomycota</taxon>
        <taxon>Pezizomycotina</taxon>
        <taxon>Dothideomycetes</taxon>
        <taxon>Pleosporomycetidae</taxon>
        <taxon>Pleosporales</taxon>
        <taxon>Pleosporineae</taxon>
        <taxon>Pleosporaceae</taxon>
        <taxon>Pyrenophora</taxon>
    </lineage>
</organism>
<keyword id="KW-0963">Cytoplasm</keyword>
<keyword id="KW-1185">Reference proteome</keyword>
<keyword id="KW-0819">tRNA processing</keyword>
<protein>
    <recommendedName>
        <fullName evidence="1">Cytoplasmic tRNA 2-thiolation protein 2</fullName>
    </recommendedName>
</protein>
<gene>
    <name type="primary">ncs2</name>
    <name type="synonym">ctu2</name>
    <name type="ORF">PTRG_05556</name>
</gene>
<feature type="chain" id="PRO_0000369302" description="Cytoplasmic tRNA 2-thiolation protein 2">
    <location>
        <begin position="1"/>
        <end position="380"/>
    </location>
</feature>
<reference key="1">
    <citation type="journal article" date="2013" name="G3 (Bethesda)">
        <title>Comparative genomics of a plant-pathogenic fungus, Pyrenophora tritici-repentis, reveals transduplication and the impact of repeat elements on pathogenicity and population divergence.</title>
        <authorList>
            <person name="Manning V.A."/>
            <person name="Pandelova I."/>
            <person name="Dhillon B."/>
            <person name="Wilhelm L.J."/>
            <person name="Goodwin S.B."/>
            <person name="Berlin A.M."/>
            <person name="Figueroa M."/>
            <person name="Freitag M."/>
            <person name="Hane J.K."/>
            <person name="Henrissat B."/>
            <person name="Holman W.H."/>
            <person name="Kodira C.D."/>
            <person name="Martin J."/>
            <person name="Oliver R.P."/>
            <person name="Robbertse B."/>
            <person name="Schackwitz W."/>
            <person name="Schwartz D.C."/>
            <person name="Spatafora J.W."/>
            <person name="Turgeon B.G."/>
            <person name="Yandava C."/>
            <person name="Young S."/>
            <person name="Zhou S."/>
            <person name="Zeng Q."/>
            <person name="Grigoriev I.V."/>
            <person name="Ma L.-J."/>
            <person name="Ciuffetti L.M."/>
        </authorList>
    </citation>
    <scope>NUCLEOTIDE SEQUENCE [LARGE SCALE GENOMIC DNA]</scope>
    <source>
        <strain>Pt-1C-BFP</strain>
    </source>
</reference>
<evidence type="ECO:0000255" key="1">
    <source>
        <dbReference type="HAMAP-Rule" id="MF_03054"/>
    </source>
</evidence>
<sequence length="380" mass="41933">MPGKEIVDASNEPCRRCKASSVLVVRSEPLCHDCFARYIHTKCIKRLETFRVNFTAEQQPRVLVPLSFGISSVTLLHVLDLHQRTQKSKTGRTGFNISAVYIEDPEQSIMAEDLLDQVREQYSGHQYASLPLHDVFRLVQDDASIRSLVPETQYASTPEEKLVHMINSLTSATARADVLSTLKTRLIVEHAKLTGCESILWGDSTTRLAQKTLSETAKGRGFSLPWQVSDGPSPFGLNFHYPLRDVLKKELVSYMNMAETGLKTLVHETSIGATQASTSSKNTTIDDLMKQYFESVEDNFPSIVANVVRTASRLEAQPDALSEPKCSLCSMPVSGGRFGIHGWGGDQQDGDDFGSTHANRTICYGCTRSVPKATSSTNGN</sequence>
<comment type="function">
    <text evidence="1">Plays a central role in 2-thiolation of mcm(5)S(2)U at tRNA wobble positions of tRNA(Lys), tRNA(Glu) and tRNA(Gln). May act by forming a heterodimer with ncs6 that ligates sulfur from thiocarboxylated urm1 onto the uridine of tRNAs at wobble position. Prior mcm(5) tRNA modification by the elongator complex is required for 2-thiolation. May also be involved in protein urmylation.</text>
</comment>
<comment type="pathway">
    <text evidence="1">tRNA modification; 5-methoxycarbonylmethyl-2-thiouridine-tRNA biosynthesis.</text>
</comment>
<comment type="subcellular location">
    <subcellularLocation>
        <location evidence="1">Cytoplasm</location>
    </subcellularLocation>
</comment>
<comment type="similarity">
    <text evidence="1">Belongs to the CTU2/NCS2 family.</text>
</comment>
<name>CTU2_PYRTR</name>
<dbReference type="EMBL" id="DS231619">
    <property type="protein sequence ID" value="EDU48476.1"/>
    <property type="molecule type" value="Genomic_DNA"/>
</dbReference>
<dbReference type="RefSeq" id="XP_001935889.1">
    <property type="nucleotide sequence ID" value="XM_001935854.1"/>
</dbReference>
<dbReference type="SMR" id="B2W6W8"/>
<dbReference type="FunCoup" id="B2W6W8">
    <property type="interactions" value="169"/>
</dbReference>
<dbReference type="STRING" id="426418.B2W6W8"/>
<dbReference type="EnsemblFungi" id="EDU48476">
    <property type="protein sequence ID" value="EDU48476"/>
    <property type="gene ID" value="PTRG_05556"/>
</dbReference>
<dbReference type="GeneID" id="6343809"/>
<dbReference type="KEGG" id="ptrr:6343809"/>
<dbReference type="eggNOG" id="KOG2594">
    <property type="taxonomic scope" value="Eukaryota"/>
</dbReference>
<dbReference type="HOGENOM" id="CLU_024534_3_0_1"/>
<dbReference type="InParanoid" id="B2W6W8"/>
<dbReference type="OMA" id="KQRKQMM"/>
<dbReference type="OrthoDB" id="26817at28556"/>
<dbReference type="UniPathway" id="UPA00988"/>
<dbReference type="Proteomes" id="UP000001471">
    <property type="component" value="Unassembled WGS sequence"/>
</dbReference>
<dbReference type="GO" id="GO:0005829">
    <property type="term" value="C:cytosol"/>
    <property type="evidence" value="ECO:0000250"/>
    <property type="project" value="UniProtKB"/>
</dbReference>
<dbReference type="GO" id="GO:0016779">
    <property type="term" value="F:nucleotidyltransferase activity"/>
    <property type="evidence" value="ECO:0007669"/>
    <property type="project" value="UniProtKB-UniRule"/>
</dbReference>
<dbReference type="GO" id="GO:0016783">
    <property type="term" value="F:sulfurtransferase activity"/>
    <property type="evidence" value="ECO:0007669"/>
    <property type="project" value="TreeGrafter"/>
</dbReference>
<dbReference type="GO" id="GO:0000049">
    <property type="term" value="F:tRNA binding"/>
    <property type="evidence" value="ECO:0007669"/>
    <property type="project" value="InterPro"/>
</dbReference>
<dbReference type="GO" id="GO:0032447">
    <property type="term" value="P:protein urmylation"/>
    <property type="evidence" value="ECO:0007669"/>
    <property type="project" value="UniProtKB-UniRule"/>
</dbReference>
<dbReference type="GO" id="GO:0034227">
    <property type="term" value="P:tRNA thio-modification"/>
    <property type="evidence" value="ECO:0000250"/>
    <property type="project" value="UniProtKB"/>
</dbReference>
<dbReference type="GO" id="GO:0002143">
    <property type="term" value="P:tRNA wobble position uridine thiolation"/>
    <property type="evidence" value="ECO:0007669"/>
    <property type="project" value="TreeGrafter"/>
</dbReference>
<dbReference type="GO" id="GO:0002098">
    <property type="term" value="P:tRNA wobble uridine modification"/>
    <property type="evidence" value="ECO:0000250"/>
    <property type="project" value="UniProtKB"/>
</dbReference>
<dbReference type="Gene3D" id="3.40.50.620">
    <property type="entry name" value="HUPs"/>
    <property type="match status" value="1"/>
</dbReference>
<dbReference type="HAMAP" id="MF_03054">
    <property type="entry name" value="CTU2"/>
    <property type="match status" value="1"/>
</dbReference>
<dbReference type="InterPro" id="IPR019407">
    <property type="entry name" value="CTU2"/>
</dbReference>
<dbReference type="InterPro" id="IPR014729">
    <property type="entry name" value="Rossmann-like_a/b/a_fold"/>
</dbReference>
<dbReference type="PANTHER" id="PTHR20882">
    <property type="entry name" value="CYTOPLASMIC TRNA 2-THIOLATION PROTEIN 2"/>
    <property type="match status" value="1"/>
</dbReference>
<dbReference type="PANTHER" id="PTHR20882:SF14">
    <property type="entry name" value="CYTOPLASMIC TRNA 2-THIOLATION PROTEIN 2"/>
    <property type="match status" value="1"/>
</dbReference>
<dbReference type="Pfam" id="PF10288">
    <property type="entry name" value="CTU2"/>
    <property type="match status" value="1"/>
</dbReference>
<dbReference type="SUPFAM" id="SSF52402">
    <property type="entry name" value="Adenine nucleotide alpha hydrolases-like"/>
    <property type="match status" value="1"/>
</dbReference>
<accession>B2W6W8</accession>